<organism>
    <name type="scientific">Caenorhabditis briggsae</name>
    <dbReference type="NCBI Taxonomy" id="6238"/>
    <lineage>
        <taxon>Eukaryota</taxon>
        <taxon>Metazoa</taxon>
        <taxon>Ecdysozoa</taxon>
        <taxon>Nematoda</taxon>
        <taxon>Chromadorea</taxon>
        <taxon>Rhabditida</taxon>
        <taxon>Rhabditina</taxon>
        <taxon>Rhabditomorpha</taxon>
        <taxon>Rhabditoidea</taxon>
        <taxon>Rhabditidae</taxon>
        <taxon>Peloderinae</taxon>
        <taxon>Caenorhabditis</taxon>
    </lineage>
</organism>
<accession>A8XLL3</accession>
<gene>
    <name evidence="4" type="primary">tpst-2</name>
    <name type="ORF">CBG15241</name>
</gene>
<proteinExistence type="inferred from homology"/>
<dbReference type="EC" id="2.8.2.20" evidence="1"/>
<dbReference type="EMBL" id="HE601055">
    <property type="protein sequence ID" value="CAP33517.2"/>
    <property type="molecule type" value="Genomic_DNA"/>
</dbReference>
<dbReference type="SMR" id="A8XLL3"/>
<dbReference type="STRING" id="6238.A8XLL3"/>
<dbReference type="GlyCosmos" id="A8XLL3">
    <property type="glycosylation" value="2 sites, No reported glycans"/>
</dbReference>
<dbReference type="EnsemblMetazoa" id="CBG15241.1">
    <property type="protein sequence ID" value="CBG15241.1"/>
    <property type="gene ID" value="WBGene00035555"/>
</dbReference>
<dbReference type="WormBase" id="CBG15241">
    <property type="protein sequence ID" value="CBP27629"/>
    <property type="gene ID" value="WBGene00035555"/>
    <property type="gene designation" value="Cbr-tpst-2"/>
</dbReference>
<dbReference type="eggNOG" id="KOG3988">
    <property type="taxonomic scope" value="Eukaryota"/>
</dbReference>
<dbReference type="HOGENOM" id="CLU_046916_0_0_1"/>
<dbReference type="InParanoid" id="A8XLL3"/>
<dbReference type="OMA" id="DPYTALW"/>
<dbReference type="Proteomes" id="UP000008549">
    <property type="component" value="Unassembled WGS sequence"/>
</dbReference>
<dbReference type="GO" id="GO:0005794">
    <property type="term" value="C:Golgi apparatus"/>
    <property type="evidence" value="ECO:0000318"/>
    <property type="project" value="GO_Central"/>
</dbReference>
<dbReference type="GO" id="GO:0008476">
    <property type="term" value="F:protein-tyrosine sulfotransferase activity"/>
    <property type="evidence" value="ECO:0000318"/>
    <property type="project" value="GO_Central"/>
</dbReference>
<dbReference type="FunFam" id="3.40.50.300:FF:002853">
    <property type="entry name" value="Protein-tyrosine sulfotransferase"/>
    <property type="match status" value="1"/>
</dbReference>
<dbReference type="Gene3D" id="3.40.50.300">
    <property type="entry name" value="P-loop containing nucleotide triphosphate hydrolases"/>
    <property type="match status" value="1"/>
</dbReference>
<dbReference type="InterPro" id="IPR027417">
    <property type="entry name" value="P-loop_NTPase"/>
</dbReference>
<dbReference type="InterPro" id="IPR026634">
    <property type="entry name" value="TPST-like"/>
</dbReference>
<dbReference type="PANTHER" id="PTHR12788">
    <property type="entry name" value="PROTEIN-TYROSINE SULFOTRANSFERASE 2"/>
    <property type="match status" value="1"/>
</dbReference>
<dbReference type="PANTHER" id="PTHR12788:SF7">
    <property type="entry name" value="PROTEIN-TYROSINE SULFOTRANSFERASE-RELATED"/>
    <property type="match status" value="1"/>
</dbReference>
<dbReference type="Pfam" id="PF13469">
    <property type="entry name" value="Sulfotransfer_3"/>
    <property type="match status" value="1"/>
</dbReference>
<dbReference type="SUPFAM" id="SSF52540">
    <property type="entry name" value="P-loop containing nucleoside triphosphate hydrolases"/>
    <property type="match status" value="1"/>
</dbReference>
<keyword id="KW-1015">Disulfide bond</keyword>
<keyword id="KW-0325">Glycoprotein</keyword>
<keyword id="KW-1185">Reference proteome</keyword>
<keyword id="KW-0808">Transferase</keyword>
<name>TPSTB_CAEBR</name>
<protein>
    <recommendedName>
        <fullName evidence="2">Putative protein-tyrosine sulfotransferase</fullName>
        <ecNumber evidence="1">2.8.2.20</ecNumber>
    </recommendedName>
    <alternativeName>
        <fullName evidence="2">Tyrosylprotein sulfotransferase</fullName>
        <shortName evidence="2">TPST</shortName>
    </alternativeName>
</protein>
<evidence type="ECO:0000250" key="1">
    <source>
        <dbReference type="UniProtKB" id="O60704"/>
    </source>
</evidence>
<evidence type="ECO:0000250" key="2">
    <source>
        <dbReference type="UniProtKB" id="Q20351"/>
    </source>
</evidence>
<evidence type="ECO:0000255" key="3"/>
<evidence type="ECO:0000312" key="4">
    <source>
        <dbReference type="EMBL" id="CAP33517.2"/>
    </source>
</evidence>
<sequence length="280" mass="32285">MLSNFEQLIFVGGVPRSGTTLMRAILDAHPDVRCGGETMLLPSFLTWQAGWRTDWVNNSGITQEVFDDAVSAFITEIIAKHGELAPRLCNKDPYTALWLPTIQRLYPNSKFILMIRDARAVIHSMIERKVPVAGYNTSDEQSMFVKWNQEIRKMLFQCNNAPGQCIKVYYERLIQKPEEEIQRITNFLDLQYSQQMLHHHELIGAEVDLNDQEFSASQVKNSINTKALTSWFDCFSEDTLRKLDDVAPFLSVLGYDTSSSKPDYSMFADDDFYQFRNFYS</sequence>
<feature type="chain" id="PRO_0000370219" description="Putative protein-tyrosine sulfotransferase">
    <location>
        <begin position="1"/>
        <end position="280"/>
    </location>
</feature>
<feature type="active site" description="Proton donor/acceptor" evidence="1">
    <location>
        <position position="37"/>
    </location>
</feature>
<feature type="binding site" evidence="1">
    <location>
        <begin position="16"/>
        <end position="20"/>
    </location>
    <ligand>
        <name>3'-phosphoadenylyl sulfate</name>
        <dbReference type="ChEBI" id="CHEBI:58339"/>
    </ligand>
</feature>
<feature type="binding site" evidence="1">
    <location>
        <position position="116"/>
    </location>
    <ligand>
        <name>3'-phosphoadenylyl sulfate</name>
        <dbReference type="ChEBI" id="CHEBI:58339"/>
    </ligand>
</feature>
<feature type="binding site" evidence="1">
    <location>
        <position position="124"/>
    </location>
    <ligand>
        <name>3'-phosphoadenylyl sulfate</name>
        <dbReference type="ChEBI" id="CHEBI:58339"/>
    </ligand>
</feature>
<feature type="binding site" evidence="1">
    <location>
        <position position="128"/>
    </location>
    <ligand>
        <name>3'-phosphoadenylyl sulfate</name>
        <dbReference type="ChEBI" id="CHEBI:58339"/>
    </ligand>
</feature>
<feature type="binding site" evidence="1">
    <location>
        <position position="170"/>
    </location>
    <ligand>
        <name>3'-phosphoadenylyl sulfate</name>
        <dbReference type="ChEBI" id="CHEBI:58339"/>
    </ligand>
</feature>
<feature type="binding site" evidence="1">
    <location>
        <begin position="215"/>
        <end position="224"/>
    </location>
    <ligand>
        <name>3'-phosphoadenylyl sulfate</name>
        <dbReference type="ChEBI" id="CHEBI:58339"/>
    </ligand>
</feature>
<feature type="site" description="Transition state stabilizer" evidence="1">
    <location>
        <position position="91"/>
    </location>
</feature>
<feature type="site" description="Transition state stabilizer" evidence="1">
    <location>
        <position position="215"/>
    </location>
</feature>
<feature type="glycosylation site" description="N-linked (GlcNAc...) asparagine" evidence="3">
    <location>
        <position position="57"/>
    </location>
</feature>
<feature type="glycosylation site" description="N-linked (GlcNAc...) asparagine" evidence="3">
    <location>
        <position position="136"/>
    </location>
</feature>
<feature type="disulfide bond" evidence="1">
    <location>
        <begin position="34"/>
        <end position="89"/>
    </location>
</feature>
<feature type="disulfide bond" evidence="1">
    <location>
        <begin position="158"/>
        <end position="165"/>
    </location>
</feature>
<comment type="function">
    <text evidence="1">Catalyzes the O-sulfation of tyrosine residues within acidic motifs of polypeptides, using 3'-phosphoadenylyl sulfate (PAPS) as cosubstrate.</text>
</comment>
<comment type="catalytic activity">
    <reaction evidence="1">
        <text>L-tyrosyl-[protein] + 3'-phosphoadenylyl sulfate = O-sulfo-L-tyrosine-[protein] + adenosine 3',5'-bisphosphate + H(+)</text>
        <dbReference type="Rhea" id="RHEA:16801"/>
        <dbReference type="Rhea" id="RHEA-COMP:10136"/>
        <dbReference type="Rhea" id="RHEA-COMP:11688"/>
        <dbReference type="ChEBI" id="CHEBI:15378"/>
        <dbReference type="ChEBI" id="CHEBI:46858"/>
        <dbReference type="ChEBI" id="CHEBI:58339"/>
        <dbReference type="ChEBI" id="CHEBI:58343"/>
        <dbReference type="ChEBI" id="CHEBI:65286"/>
        <dbReference type="EC" id="2.8.2.20"/>
    </reaction>
</comment>
<comment type="similarity">
    <text evidence="3">Belongs to the protein sulfotransferase family.</text>
</comment>
<reference evidence="4" key="1">
    <citation type="journal article" date="2003" name="PLoS Biol.">
        <title>The genome sequence of Caenorhabditis briggsae: a platform for comparative genomics.</title>
        <authorList>
            <person name="Stein L.D."/>
            <person name="Bao Z."/>
            <person name="Blasiar D."/>
            <person name="Blumenthal T."/>
            <person name="Brent M.R."/>
            <person name="Chen N."/>
            <person name="Chinwalla A."/>
            <person name="Clarke L."/>
            <person name="Clee C."/>
            <person name="Coghlan A."/>
            <person name="Coulson A."/>
            <person name="D'Eustachio P."/>
            <person name="Fitch D.H.A."/>
            <person name="Fulton L.A."/>
            <person name="Fulton R.E."/>
            <person name="Griffiths-Jones S."/>
            <person name="Harris T.W."/>
            <person name="Hillier L.W."/>
            <person name="Kamath R."/>
            <person name="Kuwabara P.E."/>
            <person name="Mardis E.R."/>
            <person name="Marra M.A."/>
            <person name="Miner T.L."/>
            <person name="Minx P."/>
            <person name="Mullikin J.C."/>
            <person name="Plumb R.W."/>
            <person name="Rogers J."/>
            <person name="Schein J.E."/>
            <person name="Sohrmann M."/>
            <person name="Spieth J."/>
            <person name="Stajich J.E."/>
            <person name="Wei C."/>
            <person name="Willey D."/>
            <person name="Wilson R.K."/>
            <person name="Durbin R.M."/>
            <person name="Waterston R.H."/>
        </authorList>
    </citation>
    <scope>NUCLEOTIDE SEQUENCE [LARGE SCALE GENOMIC DNA]</scope>
    <source>
        <strain evidence="4">AF16</strain>
    </source>
</reference>